<dbReference type="EMBL" id="D31784">
    <property type="protein sequence ID" value="BAA06562.1"/>
    <property type="molecule type" value="mRNA"/>
</dbReference>
<dbReference type="EMBL" id="AK291290">
    <property type="protein sequence ID" value="BAF83979.1"/>
    <property type="molecule type" value="mRNA"/>
</dbReference>
<dbReference type="EMBL" id="CH471118">
    <property type="protein sequence ID" value="EAX10764.1"/>
    <property type="molecule type" value="Genomic_DNA"/>
</dbReference>
<dbReference type="EMBL" id="BC000019">
    <property type="protein sequence ID" value="AAH00019.1"/>
    <property type="molecule type" value="mRNA"/>
</dbReference>
<dbReference type="CCDS" id="CCDS3894.1">
    <molecule id="P55285-1"/>
</dbReference>
<dbReference type="PIR" id="I37016">
    <property type="entry name" value="I37016"/>
</dbReference>
<dbReference type="RefSeq" id="NP_001349364.1">
    <molecule id="P55285-2"/>
    <property type="nucleotide sequence ID" value="NM_001362435.2"/>
</dbReference>
<dbReference type="RefSeq" id="NP_004923.1">
    <molecule id="P55285-1"/>
    <property type="nucleotide sequence ID" value="NM_004932.4"/>
</dbReference>
<dbReference type="RefSeq" id="XP_011512223.1">
    <molecule id="P55285-1"/>
    <property type="nucleotide sequence ID" value="XM_011513921.4"/>
</dbReference>
<dbReference type="RefSeq" id="XP_016864399.1">
    <property type="nucleotide sequence ID" value="XM_017008910.1"/>
</dbReference>
<dbReference type="RefSeq" id="XP_016864400.1">
    <property type="nucleotide sequence ID" value="XM_017008911.1"/>
</dbReference>
<dbReference type="RefSeq" id="XP_054207350.1">
    <molecule id="P55285-1"/>
    <property type="nucleotide sequence ID" value="XM_054351375.1"/>
</dbReference>
<dbReference type="RefSeq" id="XP_054207351.1">
    <molecule id="P55285-1"/>
    <property type="nucleotide sequence ID" value="XM_054351376.1"/>
</dbReference>
<dbReference type="PDB" id="5VEB">
    <property type="method" value="X-ray"/>
    <property type="resolution" value="2.34 A"/>
    <property type="chains" value="X/Y=490-608"/>
</dbReference>
<dbReference type="PDBsum" id="5VEB"/>
<dbReference type="SMR" id="P55285"/>
<dbReference type="BioGRID" id="107439">
    <property type="interactions" value="9"/>
</dbReference>
<dbReference type="FunCoup" id="P55285">
    <property type="interactions" value="200"/>
</dbReference>
<dbReference type="IntAct" id="P55285">
    <property type="interactions" value="2"/>
</dbReference>
<dbReference type="MINT" id="P55285"/>
<dbReference type="STRING" id="9606.ENSP00000265071"/>
<dbReference type="CarbonylDB" id="P55285"/>
<dbReference type="GlyCosmos" id="P55285">
    <property type="glycosylation" value="6 sites, No reported glycans"/>
</dbReference>
<dbReference type="GlyGen" id="P55285">
    <property type="glycosylation" value="8 sites, 78 N-linked glycans (4 sites), 1 O-linked glycan (2 sites)"/>
</dbReference>
<dbReference type="iPTMnet" id="P55285"/>
<dbReference type="PhosphoSitePlus" id="P55285"/>
<dbReference type="BioMuta" id="CDH6"/>
<dbReference type="DMDM" id="1705545"/>
<dbReference type="jPOST" id="P55285"/>
<dbReference type="MassIVE" id="P55285"/>
<dbReference type="PaxDb" id="9606-ENSP00000265071"/>
<dbReference type="PeptideAtlas" id="P55285"/>
<dbReference type="ProteomicsDB" id="56834">
    <molecule id="P55285-1"/>
</dbReference>
<dbReference type="ProteomicsDB" id="56835">
    <molecule id="P55285-2"/>
</dbReference>
<dbReference type="ABCD" id="P55285">
    <property type="antibodies" value="1 sequenced antibody"/>
</dbReference>
<dbReference type="Antibodypedia" id="2354">
    <property type="antibodies" value="456 antibodies from 37 providers"/>
</dbReference>
<dbReference type="DNASU" id="1004"/>
<dbReference type="Ensembl" id="ENST00000265071.3">
    <molecule id="P55285-1"/>
    <property type="protein sequence ID" value="ENSP00000265071.2"/>
    <property type="gene ID" value="ENSG00000113361.13"/>
</dbReference>
<dbReference type="GeneID" id="1004"/>
<dbReference type="KEGG" id="hsa:1004"/>
<dbReference type="MANE-Select" id="ENST00000265071.3">
    <property type="protein sequence ID" value="ENSP00000265071.2"/>
    <property type="RefSeq nucleotide sequence ID" value="NM_004932.4"/>
    <property type="RefSeq protein sequence ID" value="NP_004923.1"/>
</dbReference>
<dbReference type="UCSC" id="uc003jhe.3">
    <molecule id="P55285-1"/>
    <property type="organism name" value="human"/>
</dbReference>
<dbReference type="AGR" id="HGNC:1765"/>
<dbReference type="CTD" id="1004"/>
<dbReference type="DisGeNET" id="1004"/>
<dbReference type="GeneCards" id="CDH6"/>
<dbReference type="HGNC" id="HGNC:1765">
    <property type="gene designation" value="CDH6"/>
</dbReference>
<dbReference type="HPA" id="ENSG00000113361">
    <property type="expression patterns" value="Tissue enhanced (kidney)"/>
</dbReference>
<dbReference type="MIM" id="603007">
    <property type="type" value="gene"/>
</dbReference>
<dbReference type="neXtProt" id="NX_P55285"/>
<dbReference type="OpenTargets" id="ENSG00000113361"/>
<dbReference type="PharmGKB" id="PA26302"/>
<dbReference type="VEuPathDB" id="HostDB:ENSG00000113361"/>
<dbReference type="eggNOG" id="KOG3594">
    <property type="taxonomic scope" value="Eukaryota"/>
</dbReference>
<dbReference type="GeneTree" id="ENSGT00940000154673"/>
<dbReference type="HOGENOM" id="CLU_005284_3_1_1"/>
<dbReference type="InParanoid" id="P55285"/>
<dbReference type="OMA" id="RQDLHRS"/>
<dbReference type="OrthoDB" id="6252479at2759"/>
<dbReference type="PAN-GO" id="P55285">
    <property type="GO annotations" value="9 GO annotations based on evolutionary models"/>
</dbReference>
<dbReference type="PhylomeDB" id="P55285"/>
<dbReference type="TreeFam" id="TF329887"/>
<dbReference type="PathwayCommons" id="P55285"/>
<dbReference type="Reactome" id="R-HSA-418990">
    <property type="pathway name" value="Adherens junctions interactions"/>
</dbReference>
<dbReference type="SignaLink" id="P55285"/>
<dbReference type="SIGNOR" id="P55285"/>
<dbReference type="BioGRID-ORCS" id="1004">
    <property type="hits" value="10 hits in 1147 CRISPR screens"/>
</dbReference>
<dbReference type="ChiTaRS" id="CDH6">
    <property type="organism name" value="human"/>
</dbReference>
<dbReference type="GeneWiki" id="CDH6"/>
<dbReference type="GenomeRNAi" id="1004"/>
<dbReference type="Pharos" id="P55285">
    <property type="development level" value="Tbio"/>
</dbReference>
<dbReference type="PRO" id="PR:P55285"/>
<dbReference type="Proteomes" id="UP000005640">
    <property type="component" value="Chromosome 5"/>
</dbReference>
<dbReference type="RNAct" id="P55285">
    <property type="molecule type" value="protein"/>
</dbReference>
<dbReference type="Bgee" id="ENSG00000113361">
    <property type="expression patterns" value="Expressed in type B pancreatic cell and 177 other cell types or tissues"/>
</dbReference>
<dbReference type="ExpressionAtlas" id="P55285">
    <property type="expression patterns" value="baseline and differential"/>
</dbReference>
<dbReference type="GO" id="GO:0005912">
    <property type="term" value="C:adherens junction"/>
    <property type="evidence" value="ECO:0000318"/>
    <property type="project" value="GO_Central"/>
</dbReference>
<dbReference type="GO" id="GO:0016342">
    <property type="term" value="C:catenin complex"/>
    <property type="evidence" value="ECO:0000318"/>
    <property type="project" value="GO_Central"/>
</dbReference>
<dbReference type="GO" id="GO:0030054">
    <property type="term" value="C:cell junction"/>
    <property type="evidence" value="ECO:0000314"/>
    <property type="project" value="HPA"/>
</dbReference>
<dbReference type="GO" id="GO:0098978">
    <property type="term" value="C:glutamatergic synapse"/>
    <property type="evidence" value="ECO:0007669"/>
    <property type="project" value="Ensembl"/>
</dbReference>
<dbReference type="GO" id="GO:0005654">
    <property type="term" value="C:nucleoplasm"/>
    <property type="evidence" value="ECO:0000314"/>
    <property type="project" value="HPA"/>
</dbReference>
<dbReference type="GO" id="GO:0005886">
    <property type="term" value="C:plasma membrane"/>
    <property type="evidence" value="ECO:0000314"/>
    <property type="project" value="HPA"/>
</dbReference>
<dbReference type="GO" id="GO:0008013">
    <property type="term" value="F:beta-catenin binding"/>
    <property type="evidence" value="ECO:0000318"/>
    <property type="project" value="GO_Central"/>
</dbReference>
<dbReference type="GO" id="GO:0045296">
    <property type="term" value="F:cadherin binding"/>
    <property type="evidence" value="ECO:0000318"/>
    <property type="project" value="GO_Central"/>
</dbReference>
<dbReference type="GO" id="GO:0005509">
    <property type="term" value="F:calcium ion binding"/>
    <property type="evidence" value="ECO:0007669"/>
    <property type="project" value="InterPro"/>
</dbReference>
<dbReference type="GO" id="GO:0034332">
    <property type="term" value="P:adherens junction organization"/>
    <property type="evidence" value="ECO:0000318"/>
    <property type="project" value="GO_Central"/>
</dbReference>
<dbReference type="GO" id="GO:0016339">
    <property type="term" value="P:calcium-dependent cell-cell adhesion via plasma membrane cell adhesion molecules"/>
    <property type="evidence" value="ECO:0000318"/>
    <property type="project" value="GO_Central"/>
</dbReference>
<dbReference type="GO" id="GO:0007155">
    <property type="term" value="P:cell adhesion"/>
    <property type="evidence" value="ECO:0000304"/>
    <property type="project" value="ProtInc"/>
</dbReference>
<dbReference type="GO" id="GO:0016477">
    <property type="term" value="P:cell migration"/>
    <property type="evidence" value="ECO:0000318"/>
    <property type="project" value="GO_Central"/>
</dbReference>
<dbReference type="GO" id="GO:0000902">
    <property type="term" value="P:cell morphogenesis"/>
    <property type="evidence" value="ECO:0000318"/>
    <property type="project" value="GO_Central"/>
</dbReference>
<dbReference type="GO" id="GO:0044331">
    <property type="term" value="P:cell-cell adhesion mediated by cadherin"/>
    <property type="evidence" value="ECO:0000318"/>
    <property type="project" value="GO_Central"/>
</dbReference>
<dbReference type="GO" id="GO:0007043">
    <property type="term" value="P:cell-cell junction assembly"/>
    <property type="evidence" value="ECO:0000318"/>
    <property type="project" value="GO_Central"/>
</dbReference>
<dbReference type="GO" id="GO:0007156">
    <property type="term" value="P:homophilic cell adhesion via plasma membrane adhesion molecules"/>
    <property type="evidence" value="ECO:0007669"/>
    <property type="project" value="InterPro"/>
</dbReference>
<dbReference type="GO" id="GO:0007219">
    <property type="term" value="P:Notch signaling pathway"/>
    <property type="evidence" value="ECO:0007669"/>
    <property type="project" value="Ensembl"/>
</dbReference>
<dbReference type="GO" id="GO:0099560">
    <property type="term" value="P:synaptic membrane adhesion"/>
    <property type="evidence" value="ECO:0000318"/>
    <property type="project" value="GO_Central"/>
</dbReference>
<dbReference type="CDD" id="cd11304">
    <property type="entry name" value="Cadherin_repeat"/>
    <property type="match status" value="5"/>
</dbReference>
<dbReference type="FunFam" id="2.60.40.60:FF:000297">
    <property type="entry name" value="Cadherin 12"/>
    <property type="match status" value="1"/>
</dbReference>
<dbReference type="FunFam" id="2.60.40.60:FF:000009">
    <property type="entry name" value="Cadherin 24"/>
    <property type="match status" value="1"/>
</dbReference>
<dbReference type="FunFam" id="2.60.40.60:FF:000012">
    <property type="entry name" value="Cadherin 24"/>
    <property type="match status" value="1"/>
</dbReference>
<dbReference type="FunFam" id="2.60.40.60:FF:000017">
    <property type="entry name" value="Cadherin 24"/>
    <property type="match status" value="1"/>
</dbReference>
<dbReference type="FunFam" id="2.60.40.60:FF:000014">
    <property type="entry name" value="Cadherin 8"/>
    <property type="match status" value="1"/>
</dbReference>
<dbReference type="FunFam" id="4.10.900.10:FF:000006">
    <property type="entry name" value="Cadherin-9 preproprotein"/>
    <property type="match status" value="1"/>
</dbReference>
<dbReference type="Gene3D" id="2.60.40.60">
    <property type="entry name" value="Cadherins"/>
    <property type="match status" value="5"/>
</dbReference>
<dbReference type="Gene3D" id="4.10.900.10">
    <property type="entry name" value="TCF3-CBD (Catenin binding domain)"/>
    <property type="match status" value="1"/>
</dbReference>
<dbReference type="InterPro" id="IPR039808">
    <property type="entry name" value="Cadherin"/>
</dbReference>
<dbReference type="InterPro" id="IPR002126">
    <property type="entry name" value="Cadherin-like_dom"/>
</dbReference>
<dbReference type="InterPro" id="IPR015919">
    <property type="entry name" value="Cadherin-like_sf"/>
</dbReference>
<dbReference type="InterPro" id="IPR020894">
    <property type="entry name" value="Cadherin_CS"/>
</dbReference>
<dbReference type="InterPro" id="IPR000233">
    <property type="entry name" value="Cadherin_Y-type_LIR"/>
</dbReference>
<dbReference type="InterPro" id="IPR027397">
    <property type="entry name" value="Catenin-bd_sf"/>
</dbReference>
<dbReference type="PANTHER" id="PTHR24027">
    <property type="entry name" value="CADHERIN-23"/>
    <property type="match status" value="1"/>
</dbReference>
<dbReference type="PANTHER" id="PTHR24027:SF322">
    <property type="entry name" value="CADHERIN-6"/>
    <property type="match status" value="1"/>
</dbReference>
<dbReference type="Pfam" id="PF01049">
    <property type="entry name" value="CADH_Y-type_LIR"/>
    <property type="match status" value="1"/>
</dbReference>
<dbReference type="Pfam" id="PF00028">
    <property type="entry name" value="Cadherin"/>
    <property type="match status" value="5"/>
</dbReference>
<dbReference type="PRINTS" id="PR00205">
    <property type="entry name" value="CADHERIN"/>
</dbReference>
<dbReference type="SMART" id="SM00112">
    <property type="entry name" value="CA"/>
    <property type="match status" value="5"/>
</dbReference>
<dbReference type="SUPFAM" id="SSF49313">
    <property type="entry name" value="Cadherin-like"/>
    <property type="match status" value="5"/>
</dbReference>
<dbReference type="PROSITE" id="PS00232">
    <property type="entry name" value="CADHERIN_1"/>
    <property type="match status" value="3"/>
</dbReference>
<dbReference type="PROSITE" id="PS50268">
    <property type="entry name" value="CADHERIN_2"/>
    <property type="match status" value="5"/>
</dbReference>
<reference key="1">
    <citation type="journal article" date="1995" name="Cancer Res.">
        <title>Isolation and sequence analysis of human cadherin-6 complementary DNA for the full coding sequence and its expression in human carcinoma cells.</title>
        <authorList>
            <person name="Shimoyama Y."/>
            <person name="Gotoh M."/>
            <person name="Terasaki T."/>
            <person name="Kitajima M."/>
            <person name="Hirohashi S."/>
        </authorList>
    </citation>
    <scope>NUCLEOTIDE SEQUENCE [MRNA] (ISOFORM 1)</scope>
</reference>
<reference key="2">
    <citation type="journal article" date="2004" name="Nat. Genet.">
        <title>Complete sequencing and characterization of 21,243 full-length human cDNAs.</title>
        <authorList>
            <person name="Ota T."/>
            <person name="Suzuki Y."/>
            <person name="Nishikawa T."/>
            <person name="Otsuki T."/>
            <person name="Sugiyama T."/>
            <person name="Irie R."/>
            <person name="Wakamatsu A."/>
            <person name="Hayashi K."/>
            <person name="Sato H."/>
            <person name="Nagai K."/>
            <person name="Kimura K."/>
            <person name="Makita H."/>
            <person name="Sekine M."/>
            <person name="Obayashi M."/>
            <person name="Nishi T."/>
            <person name="Shibahara T."/>
            <person name="Tanaka T."/>
            <person name="Ishii S."/>
            <person name="Yamamoto J."/>
            <person name="Saito K."/>
            <person name="Kawai Y."/>
            <person name="Isono Y."/>
            <person name="Nakamura Y."/>
            <person name="Nagahari K."/>
            <person name="Murakami K."/>
            <person name="Yasuda T."/>
            <person name="Iwayanagi T."/>
            <person name="Wagatsuma M."/>
            <person name="Shiratori A."/>
            <person name="Sudo H."/>
            <person name="Hosoiri T."/>
            <person name="Kaku Y."/>
            <person name="Kodaira H."/>
            <person name="Kondo H."/>
            <person name="Sugawara M."/>
            <person name="Takahashi M."/>
            <person name="Kanda K."/>
            <person name="Yokoi T."/>
            <person name="Furuya T."/>
            <person name="Kikkawa E."/>
            <person name="Omura Y."/>
            <person name="Abe K."/>
            <person name="Kamihara K."/>
            <person name="Katsuta N."/>
            <person name="Sato K."/>
            <person name="Tanikawa M."/>
            <person name="Yamazaki M."/>
            <person name="Ninomiya K."/>
            <person name="Ishibashi T."/>
            <person name="Yamashita H."/>
            <person name="Murakawa K."/>
            <person name="Fujimori K."/>
            <person name="Tanai H."/>
            <person name="Kimata M."/>
            <person name="Watanabe M."/>
            <person name="Hiraoka S."/>
            <person name="Chiba Y."/>
            <person name="Ishida S."/>
            <person name="Ono Y."/>
            <person name="Takiguchi S."/>
            <person name="Watanabe S."/>
            <person name="Yosida M."/>
            <person name="Hotuta T."/>
            <person name="Kusano J."/>
            <person name="Kanehori K."/>
            <person name="Takahashi-Fujii A."/>
            <person name="Hara H."/>
            <person name="Tanase T.-O."/>
            <person name="Nomura Y."/>
            <person name="Togiya S."/>
            <person name="Komai F."/>
            <person name="Hara R."/>
            <person name="Takeuchi K."/>
            <person name="Arita M."/>
            <person name="Imose N."/>
            <person name="Musashino K."/>
            <person name="Yuuki H."/>
            <person name="Oshima A."/>
            <person name="Sasaki N."/>
            <person name="Aotsuka S."/>
            <person name="Yoshikawa Y."/>
            <person name="Matsunawa H."/>
            <person name="Ichihara T."/>
            <person name="Shiohata N."/>
            <person name="Sano S."/>
            <person name="Moriya S."/>
            <person name="Momiyama H."/>
            <person name="Satoh N."/>
            <person name="Takami S."/>
            <person name="Terashima Y."/>
            <person name="Suzuki O."/>
            <person name="Nakagawa S."/>
            <person name="Senoh A."/>
            <person name="Mizoguchi H."/>
            <person name="Goto Y."/>
            <person name="Shimizu F."/>
            <person name="Wakebe H."/>
            <person name="Hishigaki H."/>
            <person name="Watanabe T."/>
            <person name="Sugiyama A."/>
            <person name="Takemoto M."/>
            <person name="Kawakami B."/>
            <person name="Yamazaki M."/>
            <person name="Watanabe K."/>
            <person name="Kumagai A."/>
            <person name="Itakura S."/>
            <person name="Fukuzumi Y."/>
            <person name="Fujimori Y."/>
            <person name="Komiyama M."/>
            <person name="Tashiro H."/>
            <person name="Tanigami A."/>
            <person name="Fujiwara T."/>
            <person name="Ono T."/>
            <person name="Yamada K."/>
            <person name="Fujii Y."/>
            <person name="Ozaki K."/>
            <person name="Hirao M."/>
            <person name="Ohmori Y."/>
            <person name="Kawabata A."/>
            <person name="Hikiji T."/>
            <person name="Kobatake N."/>
            <person name="Inagaki H."/>
            <person name="Ikema Y."/>
            <person name="Okamoto S."/>
            <person name="Okitani R."/>
            <person name="Kawakami T."/>
            <person name="Noguchi S."/>
            <person name="Itoh T."/>
            <person name="Shigeta K."/>
            <person name="Senba T."/>
            <person name="Matsumura K."/>
            <person name="Nakajima Y."/>
            <person name="Mizuno T."/>
            <person name="Morinaga M."/>
            <person name="Sasaki M."/>
            <person name="Togashi T."/>
            <person name="Oyama M."/>
            <person name="Hata H."/>
            <person name="Watanabe M."/>
            <person name="Komatsu T."/>
            <person name="Mizushima-Sugano J."/>
            <person name="Satoh T."/>
            <person name="Shirai Y."/>
            <person name="Takahashi Y."/>
            <person name="Nakagawa K."/>
            <person name="Okumura K."/>
            <person name="Nagase T."/>
            <person name="Nomura N."/>
            <person name="Kikuchi H."/>
            <person name="Masuho Y."/>
            <person name="Yamashita R."/>
            <person name="Nakai K."/>
            <person name="Yada T."/>
            <person name="Nakamura Y."/>
            <person name="Ohara O."/>
            <person name="Isogai T."/>
            <person name="Sugano S."/>
        </authorList>
    </citation>
    <scope>NUCLEOTIDE SEQUENCE [LARGE SCALE MRNA] (ISOFORM 1)</scope>
</reference>
<reference key="3">
    <citation type="submission" date="2005-07" db="EMBL/GenBank/DDBJ databases">
        <authorList>
            <person name="Mural R.J."/>
            <person name="Istrail S."/>
            <person name="Sutton G.G."/>
            <person name="Florea L."/>
            <person name="Halpern A.L."/>
            <person name="Mobarry C.M."/>
            <person name="Lippert R."/>
            <person name="Walenz B."/>
            <person name="Shatkay H."/>
            <person name="Dew I."/>
            <person name="Miller J.R."/>
            <person name="Flanigan M.J."/>
            <person name="Edwards N.J."/>
            <person name="Bolanos R."/>
            <person name="Fasulo D."/>
            <person name="Halldorsson B.V."/>
            <person name="Hannenhalli S."/>
            <person name="Turner R."/>
            <person name="Yooseph S."/>
            <person name="Lu F."/>
            <person name="Nusskern D.R."/>
            <person name="Shue B.C."/>
            <person name="Zheng X.H."/>
            <person name="Zhong F."/>
            <person name="Delcher A.L."/>
            <person name="Huson D.H."/>
            <person name="Kravitz S.A."/>
            <person name="Mouchard L."/>
            <person name="Reinert K."/>
            <person name="Remington K.A."/>
            <person name="Clark A.G."/>
            <person name="Waterman M.S."/>
            <person name="Eichler E.E."/>
            <person name="Adams M.D."/>
            <person name="Hunkapiller M.W."/>
            <person name="Myers E.W."/>
            <person name="Venter J.C."/>
        </authorList>
    </citation>
    <scope>NUCLEOTIDE SEQUENCE [LARGE SCALE GENOMIC DNA]</scope>
</reference>
<reference key="4">
    <citation type="journal article" date="2004" name="Genome Res.">
        <title>The status, quality, and expansion of the NIH full-length cDNA project: the Mammalian Gene Collection (MGC).</title>
        <authorList>
            <consortium name="The MGC Project Team"/>
        </authorList>
    </citation>
    <scope>NUCLEOTIDE SEQUENCE [LARGE SCALE MRNA] (ISOFORM 2)</scope>
    <source>
        <tissue>Kidney</tissue>
    </source>
</reference>
<reference key="5">
    <citation type="journal article" date="1991" name="Cell Regul.">
        <title>Diversity of the cadherin family: evidence for eight new cadherins in nervous tissue.</title>
        <authorList>
            <person name="Suzuki S."/>
            <person name="Sano K."/>
            <person name="Tanihara H."/>
        </authorList>
    </citation>
    <scope>NUCLEOTIDE SEQUENCE [MRNA] OF 377-790 (ISOFORM 1)</scope>
    <source>
        <tissue>Fetal brain</tissue>
    </source>
</reference>
<reference key="6">
    <citation type="journal article" date="2005" name="J. Proteome Res.">
        <title>Human plasma N-glycoproteome analysis by immunoaffinity subtraction, hydrazide chemistry, and mass spectrometry.</title>
        <authorList>
            <person name="Liu T."/>
            <person name="Qian W.-J."/>
            <person name="Gritsenko M.A."/>
            <person name="Camp D.G. II"/>
            <person name="Monroe M.E."/>
            <person name="Moore R.J."/>
            <person name="Smith R.D."/>
        </authorList>
    </citation>
    <scope>GLYCOSYLATION [LARGE SCALE ANALYSIS] AT ASN-399</scope>
    <source>
        <tissue>Plasma</tissue>
    </source>
</reference>
<reference key="7">
    <citation type="journal article" date="2011" name="Sci. Signal.">
        <title>System-wide temporal characterization of the proteome and phosphoproteome of human embryonic stem cell differentiation.</title>
        <authorList>
            <person name="Rigbolt K.T."/>
            <person name="Prokhorova T.A."/>
            <person name="Akimov V."/>
            <person name="Henningsen J."/>
            <person name="Johansen P.T."/>
            <person name="Kratchmarova I."/>
            <person name="Kassem M."/>
            <person name="Mann M."/>
            <person name="Olsen J.V."/>
            <person name="Blagoev B."/>
        </authorList>
    </citation>
    <scope>IDENTIFICATION BY MASS SPECTROMETRY [LARGE SCALE ANALYSIS]</scope>
</reference>
<reference key="8">
    <citation type="journal article" date="2014" name="J. Proteomics">
        <title>An enzyme assisted RP-RPLC approach for in-depth analysis of human liver phosphoproteome.</title>
        <authorList>
            <person name="Bian Y."/>
            <person name="Song C."/>
            <person name="Cheng K."/>
            <person name="Dong M."/>
            <person name="Wang F."/>
            <person name="Huang J."/>
            <person name="Sun D."/>
            <person name="Wang L."/>
            <person name="Ye M."/>
            <person name="Zou H."/>
        </authorList>
    </citation>
    <scope>IDENTIFICATION BY MASS SPECTROMETRY [LARGE SCALE ANALYSIS]</scope>
    <source>
        <tissue>Liver</tissue>
    </source>
</reference>
<accession>P55285</accession>
<accession>A8K5H5</accession>
<accession>Q9BWS0</accession>
<feature type="signal peptide" evidence="3">
    <location>
        <begin position="1"/>
        <end position="18"/>
    </location>
</feature>
<feature type="propeptide" id="PRO_0000003761" evidence="3">
    <location>
        <begin position="19"/>
        <end position="53"/>
    </location>
</feature>
<feature type="chain" id="PRO_0000003762" description="Cadherin-6">
    <location>
        <begin position="54"/>
        <end position="790"/>
    </location>
</feature>
<feature type="topological domain" description="Extracellular" evidence="3">
    <location>
        <begin position="54"/>
        <end position="615"/>
    </location>
</feature>
<feature type="transmembrane region" description="Helical" evidence="3">
    <location>
        <begin position="616"/>
        <end position="636"/>
    </location>
</feature>
<feature type="topological domain" description="Cytoplasmic" evidence="3">
    <location>
        <begin position="637"/>
        <end position="790"/>
    </location>
</feature>
<feature type="domain" description="Cadherin 1" evidence="4">
    <location>
        <begin position="54"/>
        <end position="159"/>
    </location>
</feature>
<feature type="domain" description="Cadherin 2" evidence="4">
    <location>
        <begin position="160"/>
        <end position="268"/>
    </location>
</feature>
<feature type="domain" description="Cadherin 3" evidence="4">
    <location>
        <begin position="269"/>
        <end position="383"/>
    </location>
</feature>
<feature type="domain" description="Cadherin 4" evidence="4">
    <location>
        <begin position="384"/>
        <end position="486"/>
    </location>
</feature>
<feature type="domain" description="Cadherin 5" evidence="4">
    <location>
        <begin position="487"/>
        <end position="608"/>
    </location>
</feature>
<feature type="region of interest" description="Disordered" evidence="5">
    <location>
        <begin position="259"/>
        <end position="288"/>
    </location>
</feature>
<feature type="compositionally biased region" description="Polar residues" evidence="5">
    <location>
        <begin position="269"/>
        <end position="279"/>
    </location>
</feature>
<feature type="modified residue" description="Phosphoserine" evidence="2">
    <location>
        <position position="786"/>
    </location>
</feature>
<feature type="modified residue" description="Phosphoserine" evidence="2">
    <location>
        <position position="790"/>
    </location>
</feature>
<feature type="glycosylation site" description="N-linked (GlcNAc...) asparagine" evidence="3">
    <location>
        <position position="49"/>
    </location>
</feature>
<feature type="glycosylation site" description="N-linked (GlcNAc...) asparagine" evidence="3">
    <location>
        <position position="255"/>
    </location>
</feature>
<feature type="glycosylation site" description="N-linked (GlcNAc...) asparagine" evidence="6">
    <location>
        <position position="399"/>
    </location>
</feature>
<feature type="glycosylation site" description="N-linked (GlcNAc...) asparagine" evidence="3">
    <location>
        <position position="437"/>
    </location>
</feature>
<feature type="glycosylation site" description="N-linked (GlcNAc...) asparagine" evidence="3">
    <location>
        <position position="455"/>
    </location>
</feature>
<feature type="glycosylation site" description="N-linked (GlcNAc...) asparagine" evidence="3">
    <location>
        <position position="536"/>
    </location>
</feature>
<feature type="splice variant" id="VSP_000636" description="In isoform 2." evidence="7">
    <original>VTVVLFAALRRQRKKEPLIISKEDIRDNIVSYNDEG</original>
    <variation>GKLVLPASYLPMVRGSHCYCDTLDLSASPIKAYSLI</variation>
    <location>
        <begin position="628"/>
        <end position="663"/>
    </location>
</feature>
<feature type="splice variant" id="VSP_000637" description="In isoform 2." evidence="7">
    <location>
        <begin position="664"/>
        <end position="790"/>
    </location>
</feature>
<feature type="sequence conflict" description="In Ref. 5; no nucleotide entry." evidence="8" ref="5">
    <original>V</original>
    <variation>I</variation>
    <location>
        <position position="421"/>
    </location>
</feature>
<feature type="sequence conflict" description="In Ref. 5; no nucleotide entry." evidence="8" ref="5">
    <original>T</original>
    <variation>I</variation>
    <location>
        <position position="425"/>
    </location>
</feature>
<feature type="strand" evidence="9">
    <location>
        <begin position="495"/>
        <end position="497"/>
    </location>
</feature>
<feature type="strand" evidence="9">
    <location>
        <begin position="505"/>
        <end position="512"/>
    </location>
</feature>
<feature type="strand" evidence="9">
    <location>
        <begin position="524"/>
        <end position="527"/>
    </location>
</feature>
<feature type="turn" evidence="9">
    <location>
        <begin position="529"/>
        <end position="531"/>
    </location>
</feature>
<feature type="strand" evidence="9">
    <location>
        <begin position="532"/>
        <end position="534"/>
    </location>
</feature>
<feature type="strand" evidence="9">
    <location>
        <begin position="536"/>
        <end position="541"/>
    </location>
</feature>
<feature type="strand" evidence="9">
    <location>
        <begin position="543"/>
        <end position="551"/>
    </location>
</feature>
<feature type="turn" evidence="9">
    <location>
        <begin position="558"/>
        <end position="560"/>
    </location>
</feature>
<feature type="strand" evidence="9">
    <location>
        <begin position="562"/>
        <end position="571"/>
    </location>
</feature>
<feature type="strand" evidence="9">
    <location>
        <begin position="573"/>
        <end position="576"/>
    </location>
</feature>
<feature type="strand" evidence="9">
    <location>
        <begin position="579"/>
        <end position="589"/>
    </location>
</feature>
<sequence length="790" mass="88309">MRTYRYFLLLFWVGQPYPTLSTPLSKRTSGFPAKKRALELSGNSKNELNRSKRSWMWNQFFLLEEYTGSDYQYVGKLHSDQDRGDGSLKYILSGDGAGDLFIINENTGDIQATKRLDREEKPVYILRAQAINRRTGRPVEPESEFIIKIHDINDNEPIFTKEVYTATVPEMSDVGTFVVQVTATDADDPTYGNSAKVVYSILQGQPYFSVESETGIIKTALLNMDRENREQYQVVIQAKDMGGQMGGLSGTTTVNITLTDVNDNPPRFPQSTYQFKTPESSPPGTPIGRIKASDADVGENAEIEYSITDGEGLDMFDVITDQETQEGIITVKKLLDFEKKKVYTLKVEASNPYVEPRFLYLGPFKDSATVRIVVEDVDEPPVFSKLAYILQIREDAQINTTIGSVTAQDPDAARNPVKYSVDRHTDMDRIFNIDSGNGSIFTSKLLDRETLLWHNITVIATEINNPKQSSRVPLYIKVLDVNDNAPEFAEFYETFVCEKAKADQLIQTLHAVDKDDPYSGHQFSFSLAPEAASGSNFTIQDNKDNTAGILTRKNGYNRHEMSTYLLPVVISDNDYPVQSSTGTVTVRVCACDHHGNMQSCHAEALIHPTGLSTGALVAILLCIVILLVTVVLFAALRRQRKKEPLIISKEDIRDNIVSYNDEGGGEEDTQAFDIGTLRNPEAIEDNKLRRDIVPEALFLPRRTPTARDNTDVRDFINQRLKENDTDPTAPPYDSLATYAYEGTGSVADSLSSLESVTTDADQDYDYLSDWGPRFKKLADMYGGVDSDKDS</sequence>
<protein>
    <recommendedName>
        <fullName>Cadherin-6</fullName>
    </recommendedName>
    <alternativeName>
        <fullName>Kidney cadherin</fullName>
        <shortName>K-cadherin</shortName>
    </alternativeName>
</protein>
<evidence type="ECO:0000250" key="1"/>
<evidence type="ECO:0000250" key="2">
    <source>
        <dbReference type="UniProtKB" id="P97326"/>
    </source>
</evidence>
<evidence type="ECO:0000255" key="3"/>
<evidence type="ECO:0000255" key="4">
    <source>
        <dbReference type="PROSITE-ProRule" id="PRU00043"/>
    </source>
</evidence>
<evidence type="ECO:0000256" key="5">
    <source>
        <dbReference type="SAM" id="MobiDB-lite"/>
    </source>
</evidence>
<evidence type="ECO:0000269" key="6">
    <source>
    </source>
</evidence>
<evidence type="ECO:0000303" key="7">
    <source>
    </source>
</evidence>
<evidence type="ECO:0000305" key="8"/>
<evidence type="ECO:0007829" key="9">
    <source>
        <dbReference type="PDB" id="5VEB"/>
    </source>
</evidence>
<proteinExistence type="evidence at protein level"/>
<name>CADH6_HUMAN</name>
<organism>
    <name type="scientific">Homo sapiens</name>
    <name type="common">Human</name>
    <dbReference type="NCBI Taxonomy" id="9606"/>
    <lineage>
        <taxon>Eukaryota</taxon>
        <taxon>Metazoa</taxon>
        <taxon>Chordata</taxon>
        <taxon>Craniata</taxon>
        <taxon>Vertebrata</taxon>
        <taxon>Euteleostomi</taxon>
        <taxon>Mammalia</taxon>
        <taxon>Eutheria</taxon>
        <taxon>Euarchontoglires</taxon>
        <taxon>Primates</taxon>
        <taxon>Haplorrhini</taxon>
        <taxon>Catarrhini</taxon>
        <taxon>Hominidae</taxon>
        <taxon>Homo</taxon>
    </lineage>
</organism>
<gene>
    <name type="primary">CDH6</name>
</gene>
<comment type="function">
    <text>Cadherins are calcium-dependent cell adhesion proteins. They preferentially interact with themselves in a homophilic manner in connecting cells; cadherins may thus contribute to the sorting of heterogeneous cell types.</text>
</comment>
<comment type="subcellular location">
    <subcellularLocation>
        <location>Cell membrane</location>
        <topology>Single-pass type I membrane protein</topology>
    </subcellularLocation>
</comment>
<comment type="alternative products">
    <event type="alternative splicing"/>
    <isoform>
        <id>P55285-1</id>
        <name>1</name>
        <sequence type="displayed"/>
    </isoform>
    <isoform>
        <id>P55285-2</id>
        <name>2</name>
        <sequence type="described" ref="VSP_000636 VSP_000637"/>
    </isoform>
</comment>
<comment type="tissue specificity">
    <text>Highly expressed in brain, cerebellum, and kidney. Lung, pancreas, and gastric mucosa show a weak expression. Also expressed in certain liver and kidney carcinomas.</text>
</comment>
<comment type="domain">
    <text evidence="1">Three calcium ions are usually bound at the interface of each cadherin domain and rigidify the connections, imparting a strong curvature to the full-length ectodomain.</text>
</comment>
<keyword id="KW-0002">3D-structure</keyword>
<keyword id="KW-0025">Alternative splicing</keyword>
<keyword id="KW-0106">Calcium</keyword>
<keyword id="KW-0130">Cell adhesion</keyword>
<keyword id="KW-1003">Cell membrane</keyword>
<keyword id="KW-0165">Cleavage on pair of basic residues</keyword>
<keyword id="KW-0325">Glycoprotein</keyword>
<keyword id="KW-0472">Membrane</keyword>
<keyword id="KW-0479">Metal-binding</keyword>
<keyword id="KW-0597">Phosphoprotein</keyword>
<keyword id="KW-1267">Proteomics identification</keyword>
<keyword id="KW-1185">Reference proteome</keyword>
<keyword id="KW-0677">Repeat</keyword>
<keyword id="KW-0732">Signal</keyword>
<keyword id="KW-0812">Transmembrane</keyword>
<keyword id="KW-1133">Transmembrane helix</keyword>